<accession>O64530</accession>
<accession>A8MSC9</accession>
<accession>Q9SCY8</accession>
<organism>
    <name type="scientific">Arabidopsis thaliana</name>
    <name type="common">Mouse-ear cress</name>
    <dbReference type="NCBI Taxonomy" id="3702"/>
    <lineage>
        <taxon>Eukaryota</taxon>
        <taxon>Viridiplantae</taxon>
        <taxon>Streptophyta</taxon>
        <taxon>Embryophyta</taxon>
        <taxon>Tracheophyta</taxon>
        <taxon>Spermatophyta</taxon>
        <taxon>Magnoliopsida</taxon>
        <taxon>eudicotyledons</taxon>
        <taxon>Gunneridae</taxon>
        <taxon>Pentapetalae</taxon>
        <taxon>rosids</taxon>
        <taxon>malvids</taxon>
        <taxon>Brassicales</taxon>
        <taxon>Brassicaceae</taxon>
        <taxon>Camelineae</taxon>
        <taxon>Arabidopsis</taxon>
    </lineage>
</organism>
<comment type="function">
    <text evidence="2 4 5 6 9">Catalyzes the transfer of a sulfur ion from a donor to cyanide or to other thiol compounds. Substrate preference is 3-mercaptopyruvate &gt; thiosulfate. Involved in embryo and seed development.</text>
</comment>
<comment type="catalytic activity">
    <reaction evidence="2 4 5 6">
        <text>thiosulfate + hydrogen cyanide = thiocyanate + sulfite + 2 H(+)</text>
        <dbReference type="Rhea" id="RHEA:16881"/>
        <dbReference type="ChEBI" id="CHEBI:15378"/>
        <dbReference type="ChEBI" id="CHEBI:17359"/>
        <dbReference type="ChEBI" id="CHEBI:18022"/>
        <dbReference type="ChEBI" id="CHEBI:18407"/>
        <dbReference type="ChEBI" id="CHEBI:33542"/>
        <dbReference type="EC" id="2.8.1.1"/>
    </reaction>
</comment>
<comment type="catalytic activity">
    <reaction evidence="2 4 5 6">
        <text>2-oxo-3-sulfanylpropanoate + [thioredoxin]-dithiol = [thioredoxin]-disulfide + hydrogen sulfide + pyruvate + H(+)</text>
        <dbReference type="Rhea" id="RHEA:21740"/>
        <dbReference type="Rhea" id="RHEA-COMP:10698"/>
        <dbReference type="Rhea" id="RHEA-COMP:10700"/>
        <dbReference type="ChEBI" id="CHEBI:15361"/>
        <dbReference type="ChEBI" id="CHEBI:15378"/>
        <dbReference type="ChEBI" id="CHEBI:29919"/>
        <dbReference type="ChEBI" id="CHEBI:29950"/>
        <dbReference type="ChEBI" id="CHEBI:50058"/>
        <dbReference type="ChEBI" id="CHEBI:57678"/>
        <dbReference type="EC" id="2.8.1.2"/>
    </reaction>
</comment>
<comment type="biophysicochemical properties">
    <kinetics>
        <KM evidence="4 5 6">0.25 mM for thiosulfate</KM>
        <KM evidence="4 5 6">0.7 mM for thiosulfate</KM>
        <KM evidence="4 5 6">1.7 mM for thiosulfate</KM>
        <KM evidence="4 5 6">3.4 mM for 3-mercaptopyruvate</KM>
        <KM evidence="4 5 6">3.7 mM for 3-mercaptopyruvate</KM>
        <KM evidence="4 5 6">11 mM for sodium mercaptopyruvate</KM>
    </kinetics>
</comment>
<comment type="subcellular location">
    <subcellularLocation>
        <location evidence="2 3 4 8">Mitochondrion</location>
    </subcellularLocation>
</comment>
<comment type="alternative products">
    <event type="alternative splicing"/>
    <isoform>
        <id>O64530-1</id>
        <name>1</name>
        <sequence type="displayed"/>
    </isoform>
    <isoform>
        <id>O64530-2</id>
        <name>2</name>
        <sequence type="described" ref="VSP_042633"/>
    </isoform>
</comment>
<comment type="tissue specificity">
    <text evidence="4 9">Expressed in roots, rosette and cauline leaves, stems, flowers and siliques.</text>
</comment>
<comment type="induction">
    <text evidence="7">Induced during senescence.</text>
</comment>
<comment type="disruption phenotype">
    <text evidence="9">Shrunken seeds with unmature embryos.</text>
</comment>
<gene>
    <name type="primary">STR1</name>
    <name type="synonym">MST1</name>
    <name type="synonym">RDH1</name>
    <name type="synonym">ST1</name>
    <name type="ordered locus">At1g79230</name>
    <name type="ORF">YUP8H12R.17</name>
</gene>
<name>STR1_ARATH</name>
<dbReference type="EC" id="2.8.1.1" evidence="2 4 5 6"/>
<dbReference type="EC" id="2.8.1.2" evidence="2 4 5 6"/>
<dbReference type="EMBL" id="AJ011045">
    <property type="protein sequence ID" value="CAB55306.1"/>
    <property type="molecule type" value="mRNA"/>
</dbReference>
<dbReference type="EMBL" id="AJ131404">
    <property type="protein sequence ID" value="CAB64716.1"/>
    <property type="molecule type" value="mRNA"/>
</dbReference>
<dbReference type="EMBL" id="AB032864">
    <property type="protein sequence ID" value="BAA85148.1"/>
    <property type="molecule type" value="mRNA"/>
</dbReference>
<dbReference type="EMBL" id="AC002986">
    <property type="protein sequence ID" value="AAC17062.1"/>
    <property type="molecule type" value="Genomic_DNA"/>
</dbReference>
<dbReference type="EMBL" id="CP002684">
    <property type="protein sequence ID" value="AEE36219.1"/>
    <property type="molecule type" value="Genomic_DNA"/>
</dbReference>
<dbReference type="EMBL" id="CP002684">
    <property type="protein sequence ID" value="AEE36221.1"/>
    <property type="molecule type" value="Genomic_DNA"/>
</dbReference>
<dbReference type="EMBL" id="AK118208">
    <property type="protein sequence ID" value="BAC42830.1"/>
    <property type="molecule type" value="mRNA"/>
</dbReference>
<dbReference type="EMBL" id="AY075685">
    <property type="protein sequence ID" value="AAL77692.1"/>
    <property type="molecule type" value="mRNA"/>
</dbReference>
<dbReference type="EMBL" id="BT026029">
    <property type="protein sequence ID" value="ABG48385.1"/>
    <property type="molecule type" value="mRNA"/>
</dbReference>
<dbReference type="EMBL" id="AY087137">
    <property type="protein sequence ID" value="AAM64695.1"/>
    <property type="molecule type" value="mRNA"/>
</dbReference>
<dbReference type="PIR" id="T01034">
    <property type="entry name" value="T01034"/>
</dbReference>
<dbReference type="PIR" id="T52658">
    <property type="entry name" value="T52658"/>
</dbReference>
<dbReference type="RefSeq" id="NP_001077848.1">
    <molecule id="O64530-2"/>
    <property type="nucleotide sequence ID" value="NM_001084379.1"/>
</dbReference>
<dbReference type="RefSeq" id="NP_565203.1">
    <molecule id="O64530-1"/>
    <property type="nucleotide sequence ID" value="NM_106574.3"/>
</dbReference>
<dbReference type="SMR" id="O64530"/>
<dbReference type="FunCoup" id="O64530">
    <property type="interactions" value="3241"/>
</dbReference>
<dbReference type="IntAct" id="O64530">
    <property type="interactions" value="1"/>
</dbReference>
<dbReference type="STRING" id="3702.O64530"/>
<dbReference type="iPTMnet" id="O64530"/>
<dbReference type="MetOSite" id="O64530"/>
<dbReference type="SwissPalm" id="O64530"/>
<dbReference type="PaxDb" id="3702-AT1G79230.1"/>
<dbReference type="ProteomicsDB" id="228364">
    <molecule id="O64530-1"/>
</dbReference>
<dbReference type="EnsemblPlants" id="AT1G79230.1">
    <molecule id="O64530-1"/>
    <property type="protein sequence ID" value="AT1G79230.1"/>
    <property type="gene ID" value="AT1G79230"/>
</dbReference>
<dbReference type="EnsemblPlants" id="AT1G79230.3">
    <molecule id="O64530-2"/>
    <property type="protein sequence ID" value="AT1G79230.3"/>
    <property type="gene ID" value="AT1G79230"/>
</dbReference>
<dbReference type="GeneID" id="844264"/>
<dbReference type="Gramene" id="AT1G79230.1">
    <molecule id="O64530-1"/>
    <property type="protein sequence ID" value="AT1G79230.1"/>
    <property type="gene ID" value="AT1G79230"/>
</dbReference>
<dbReference type="Gramene" id="AT1G79230.3">
    <molecule id="O64530-2"/>
    <property type="protein sequence ID" value="AT1G79230.3"/>
    <property type="gene ID" value="AT1G79230"/>
</dbReference>
<dbReference type="KEGG" id="ath:AT1G79230"/>
<dbReference type="Araport" id="AT1G79230"/>
<dbReference type="TAIR" id="AT1G79230">
    <property type="gene designation" value="MST1"/>
</dbReference>
<dbReference type="eggNOG" id="KOG1529">
    <property type="taxonomic scope" value="Eukaryota"/>
</dbReference>
<dbReference type="InParanoid" id="O64530"/>
<dbReference type="OrthoDB" id="270167at2759"/>
<dbReference type="PhylomeDB" id="O64530"/>
<dbReference type="BioCyc" id="ARA:AT1G79230-MONOMER"/>
<dbReference type="SABIO-RK" id="O64530"/>
<dbReference type="CD-CODE" id="4299E36E">
    <property type="entry name" value="Nucleolus"/>
</dbReference>
<dbReference type="PRO" id="PR:O64530"/>
<dbReference type="Proteomes" id="UP000006548">
    <property type="component" value="Chromosome 1"/>
</dbReference>
<dbReference type="ExpressionAtlas" id="O64530">
    <property type="expression patterns" value="baseline and differential"/>
</dbReference>
<dbReference type="GO" id="GO:0009507">
    <property type="term" value="C:chloroplast"/>
    <property type="evidence" value="ECO:0007005"/>
    <property type="project" value="TAIR"/>
</dbReference>
<dbReference type="GO" id="GO:0005829">
    <property type="term" value="C:cytosol"/>
    <property type="evidence" value="ECO:0007005"/>
    <property type="project" value="TAIR"/>
</dbReference>
<dbReference type="GO" id="GO:0005739">
    <property type="term" value="C:mitochondrion"/>
    <property type="evidence" value="ECO:0000314"/>
    <property type="project" value="TAIR"/>
</dbReference>
<dbReference type="GO" id="GO:0016784">
    <property type="term" value="F:3-mercaptopyruvate sulfurtransferase activity"/>
    <property type="evidence" value="ECO:0000314"/>
    <property type="project" value="TAIR"/>
</dbReference>
<dbReference type="GO" id="GO:0016783">
    <property type="term" value="F:sulfurtransferase activity"/>
    <property type="evidence" value="ECO:0000314"/>
    <property type="project" value="TAIR"/>
</dbReference>
<dbReference type="GO" id="GO:0004792">
    <property type="term" value="F:thiosulfate-cyanide sulfurtransferase activity"/>
    <property type="evidence" value="ECO:0000314"/>
    <property type="project" value="UniProtKB"/>
</dbReference>
<dbReference type="GO" id="GO:0009793">
    <property type="term" value="P:embryo development ending in seed dormancy"/>
    <property type="evidence" value="ECO:0000315"/>
    <property type="project" value="UniProtKB"/>
</dbReference>
<dbReference type="CDD" id="cd01448">
    <property type="entry name" value="TST_Repeat_1"/>
    <property type="match status" value="1"/>
</dbReference>
<dbReference type="CDD" id="cd01449">
    <property type="entry name" value="TST_Repeat_2"/>
    <property type="match status" value="1"/>
</dbReference>
<dbReference type="FunFam" id="3.40.250.10:FF:000001">
    <property type="entry name" value="Sulfurtransferase"/>
    <property type="match status" value="1"/>
</dbReference>
<dbReference type="FunFam" id="3.40.250.10:FF:000019">
    <property type="entry name" value="Sulfurtransferase"/>
    <property type="match status" value="1"/>
</dbReference>
<dbReference type="Gene3D" id="3.40.250.10">
    <property type="entry name" value="Rhodanese-like domain"/>
    <property type="match status" value="2"/>
</dbReference>
<dbReference type="InterPro" id="IPR001763">
    <property type="entry name" value="Rhodanese-like_dom"/>
</dbReference>
<dbReference type="InterPro" id="IPR036873">
    <property type="entry name" value="Rhodanese-like_dom_sf"/>
</dbReference>
<dbReference type="InterPro" id="IPR001307">
    <property type="entry name" value="Thiosulphate_STrfase_CS"/>
</dbReference>
<dbReference type="InterPro" id="IPR045078">
    <property type="entry name" value="TST/MPST-like"/>
</dbReference>
<dbReference type="PANTHER" id="PTHR11364:SF27">
    <property type="entry name" value="SULFURTRANSFERASE"/>
    <property type="match status" value="1"/>
</dbReference>
<dbReference type="PANTHER" id="PTHR11364">
    <property type="entry name" value="THIOSULFATE SULFERTANSFERASE"/>
    <property type="match status" value="1"/>
</dbReference>
<dbReference type="Pfam" id="PF00581">
    <property type="entry name" value="Rhodanese"/>
    <property type="match status" value="2"/>
</dbReference>
<dbReference type="SMART" id="SM00450">
    <property type="entry name" value="RHOD"/>
    <property type="match status" value="2"/>
</dbReference>
<dbReference type="SUPFAM" id="SSF52821">
    <property type="entry name" value="Rhodanese/Cell cycle control phosphatase"/>
    <property type="match status" value="2"/>
</dbReference>
<dbReference type="PROSITE" id="PS00683">
    <property type="entry name" value="RHODANESE_2"/>
    <property type="match status" value="1"/>
</dbReference>
<dbReference type="PROSITE" id="PS50206">
    <property type="entry name" value="RHODANESE_3"/>
    <property type="match status" value="2"/>
</dbReference>
<reference key="1">
    <citation type="journal article" date="2000" name="FEBS Lett.">
        <title>Evidence for the existence of rhodanese (thiosulfate:cyanide sulfurtransferase) in plants: preliminary characterization of two rhodanese cDNAs from Arabidopsis thaliana.</title>
        <authorList>
            <person name="Hatzfeld Y."/>
            <person name="Saito K."/>
        </authorList>
    </citation>
    <scope>NUCLEOTIDE SEQUENCE [MRNA] (ISOFORM 1)</scope>
    <scope>SUBCELLULAR LOCATION</scope>
    <source>
        <strain>cv. Columbia</strain>
    </source>
</reference>
<reference key="2">
    <citation type="journal article" date="2000" name="Eur. J. Biochem.">
        <title>Characterization of a sulfurtransferase from Arabidopsis thaliana.</title>
        <authorList>
            <person name="Papenbrock J."/>
            <person name="Schmidt A."/>
        </authorList>
    </citation>
    <scope>NUCLEOTIDE SEQUENCE [MRNA] (ISOFORM 1)</scope>
    <scope>FUNCTION</scope>
    <scope>CATALYTIC ACTIVITY</scope>
    <scope>SUBCELLULAR LOCATION</scope>
    <source>
        <strain>cv. Columbia</strain>
    </source>
</reference>
<reference key="3">
    <citation type="journal article" date="2000" name="Eur. J. Biochem.">
        <title>Plant mercaptopyruvate sulfurtransferases: molecular cloning, subcellular localization and enzymatic activities.</title>
        <authorList>
            <person name="Nakamura T."/>
            <person name="Yamaguchi Y."/>
            <person name="Sano H."/>
        </authorList>
    </citation>
    <scope>NUCLEOTIDE SEQUENCE [MRNA] (ISOFORM 1)</scope>
    <scope>FUNCTION</scope>
    <scope>CATALYTIC ACTIVITY</scope>
    <scope>BIOPHYSICOCHEMICAL PROPERTIES</scope>
    <scope>SUBCELLULAR LOCATION</scope>
    <scope>TISSUE SPECIFICITY</scope>
    <source>
        <strain>cv. Columbia</strain>
    </source>
</reference>
<reference key="4">
    <citation type="journal article" date="2000" name="Nature">
        <title>Sequence and analysis of chromosome 1 of the plant Arabidopsis thaliana.</title>
        <authorList>
            <person name="Theologis A."/>
            <person name="Ecker J.R."/>
            <person name="Palm C.J."/>
            <person name="Federspiel N.A."/>
            <person name="Kaul S."/>
            <person name="White O."/>
            <person name="Alonso J."/>
            <person name="Altafi H."/>
            <person name="Araujo R."/>
            <person name="Bowman C.L."/>
            <person name="Brooks S.Y."/>
            <person name="Buehler E."/>
            <person name="Chan A."/>
            <person name="Chao Q."/>
            <person name="Chen H."/>
            <person name="Cheuk R.F."/>
            <person name="Chin C.W."/>
            <person name="Chung M.K."/>
            <person name="Conn L."/>
            <person name="Conway A.B."/>
            <person name="Conway A.R."/>
            <person name="Creasy T.H."/>
            <person name="Dewar K."/>
            <person name="Dunn P."/>
            <person name="Etgu P."/>
            <person name="Feldblyum T.V."/>
            <person name="Feng J.-D."/>
            <person name="Fong B."/>
            <person name="Fujii C.Y."/>
            <person name="Gill J.E."/>
            <person name="Goldsmith A.D."/>
            <person name="Haas B."/>
            <person name="Hansen N.F."/>
            <person name="Hughes B."/>
            <person name="Huizar L."/>
            <person name="Hunter J.L."/>
            <person name="Jenkins J."/>
            <person name="Johnson-Hopson C."/>
            <person name="Khan S."/>
            <person name="Khaykin E."/>
            <person name="Kim C.J."/>
            <person name="Koo H.L."/>
            <person name="Kremenetskaia I."/>
            <person name="Kurtz D.B."/>
            <person name="Kwan A."/>
            <person name="Lam B."/>
            <person name="Langin-Hooper S."/>
            <person name="Lee A."/>
            <person name="Lee J.M."/>
            <person name="Lenz C.A."/>
            <person name="Li J.H."/>
            <person name="Li Y.-P."/>
            <person name="Lin X."/>
            <person name="Liu S.X."/>
            <person name="Liu Z.A."/>
            <person name="Luros J.S."/>
            <person name="Maiti R."/>
            <person name="Marziali A."/>
            <person name="Militscher J."/>
            <person name="Miranda M."/>
            <person name="Nguyen M."/>
            <person name="Nierman W.C."/>
            <person name="Osborne B.I."/>
            <person name="Pai G."/>
            <person name="Peterson J."/>
            <person name="Pham P.K."/>
            <person name="Rizzo M."/>
            <person name="Rooney T."/>
            <person name="Rowley D."/>
            <person name="Sakano H."/>
            <person name="Salzberg S.L."/>
            <person name="Schwartz J.R."/>
            <person name="Shinn P."/>
            <person name="Southwick A.M."/>
            <person name="Sun H."/>
            <person name="Tallon L.J."/>
            <person name="Tambunga G."/>
            <person name="Toriumi M.J."/>
            <person name="Town C.D."/>
            <person name="Utterback T."/>
            <person name="Van Aken S."/>
            <person name="Vaysberg M."/>
            <person name="Vysotskaia V.S."/>
            <person name="Walker M."/>
            <person name="Wu D."/>
            <person name="Yu G."/>
            <person name="Fraser C.M."/>
            <person name="Venter J.C."/>
            <person name="Davis R.W."/>
        </authorList>
    </citation>
    <scope>NUCLEOTIDE SEQUENCE [LARGE SCALE GENOMIC DNA]</scope>
    <source>
        <strain>cv. Columbia</strain>
    </source>
</reference>
<reference key="5">
    <citation type="journal article" date="2017" name="Plant J.">
        <title>Araport11: a complete reannotation of the Arabidopsis thaliana reference genome.</title>
        <authorList>
            <person name="Cheng C.Y."/>
            <person name="Krishnakumar V."/>
            <person name="Chan A.P."/>
            <person name="Thibaud-Nissen F."/>
            <person name="Schobel S."/>
            <person name="Town C.D."/>
        </authorList>
    </citation>
    <scope>GENOME REANNOTATION</scope>
    <source>
        <strain>cv. Columbia</strain>
    </source>
</reference>
<reference key="6">
    <citation type="journal article" date="2002" name="Science">
        <title>Functional annotation of a full-length Arabidopsis cDNA collection.</title>
        <authorList>
            <person name="Seki M."/>
            <person name="Narusaka M."/>
            <person name="Kamiya A."/>
            <person name="Ishida J."/>
            <person name="Satou M."/>
            <person name="Sakurai T."/>
            <person name="Nakajima M."/>
            <person name="Enju A."/>
            <person name="Akiyama K."/>
            <person name="Oono Y."/>
            <person name="Muramatsu M."/>
            <person name="Hayashizaki Y."/>
            <person name="Kawai J."/>
            <person name="Carninci P."/>
            <person name="Itoh M."/>
            <person name="Ishii Y."/>
            <person name="Arakawa T."/>
            <person name="Shibata K."/>
            <person name="Shinagawa A."/>
            <person name="Shinozaki K."/>
        </authorList>
    </citation>
    <scope>NUCLEOTIDE SEQUENCE [LARGE SCALE MRNA] (ISOFORM 1)</scope>
    <source>
        <strain>cv. Columbia</strain>
    </source>
</reference>
<reference key="7">
    <citation type="journal article" date="2003" name="Science">
        <title>Empirical analysis of transcriptional activity in the Arabidopsis genome.</title>
        <authorList>
            <person name="Yamada K."/>
            <person name="Lim J."/>
            <person name="Dale J.M."/>
            <person name="Chen H."/>
            <person name="Shinn P."/>
            <person name="Palm C.J."/>
            <person name="Southwick A.M."/>
            <person name="Wu H.C."/>
            <person name="Kim C.J."/>
            <person name="Nguyen M."/>
            <person name="Pham P.K."/>
            <person name="Cheuk R.F."/>
            <person name="Karlin-Newmann G."/>
            <person name="Liu S.X."/>
            <person name="Lam B."/>
            <person name="Sakano H."/>
            <person name="Wu T."/>
            <person name="Yu G."/>
            <person name="Miranda M."/>
            <person name="Quach H.L."/>
            <person name="Tripp M."/>
            <person name="Chang C.H."/>
            <person name="Lee J.M."/>
            <person name="Toriumi M.J."/>
            <person name="Chan M.M."/>
            <person name="Tang C.C."/>
            <person name="Onodera C.S."/>
            <person name="Deng J.M."/>
            <person name="Akiyama K."/>
            <person name="Ansari Y."/>
            <person name="Arakawa T."/>
            <person name="Banh J."/>
            <person name="Banno F."/>
            <person name="Bowser L."/>
            <person name="Brooks S.Y."/>
            <person name="Carninci P."/>
            <person name="Chao Q."/>
            <person name="Choy N."/>
            <person name="Enju A."/>
            <person name="Goldsmith A.D."/>
            <person name="Gurjal M."/>
            <person name="Hansen N.F."/>
            <person name="Hayashizaki Y."/>
            <person name="Johnson-Hopson C."/>
            <person name="Hsuan V.W."/>
            <person name="Iida K."/>
            <person name="Karnes M."/>
            <person name="Khan S."/>
            <person name="Koesema E."/>
            <person name="Ishida J."/>
            <person name="Jiang P.X."/>
            <person name="Jones T."/>
            <person name="Kawai J."/>
            <person name="Kamiya A."/>
            <person name="Meyers C."/>
            <person name="Nakajima M."/>
            <person name="Narusaka M."/>
            <person name="Seki M."/>
            <person name="Sakurai T."/>
            <person name="Satou M."/>
            <person name="Tamse R."/>
            <person name="Vaysberg M."/>
            <person name="Wallender E.K."/>
            <person name="Wong C."/>
            <person name="Yamamura Y."/>
            <person name="Yuan S."/>
            <person name="Shinozaki K."/>
            <person name="Davis R.W."/>
            <person name="Theologis A."/>
            <person name="Ecker J.R."/>
        </authorList>
    </citation>
    <scope>NUCLEOTIDE SEQUENCE [LARGE SCALE MRNA] (ISOFORM 1)</scope>
    <source>
        <strain>cv. Columbia</strain>
    </source>
</reference>
<reference key="8">
    <citation type="submission" date="2006-07" db="EMBL/GenBank/DDBJ databases">
        <title>Arabidopsis ORF clone.</title>
        <authorList>
            <person name="Quinitio C."/>
            <person name="Chen H."/>
            <person name="Kim C.J."/>
            <person name="Shinn P."/>
            <person name="Ecker J.R."/>
        </authorList>
    </citation>
    <scope>NUCLEOTIDE SEQUENCE [LARGE SCALE MRNA] (ISOFORM 1)</scope>
    <source>
        <strain>cv. Columbia</strain>
    </source>
</reference>
<reference key="9">
    <citation type="submission" date="2002-03" db="EMBL/GenBank/DDBJ databases">
        <title>Full-length cDNA from Arabidopsis thaliana.</title>
        <authorList>
            <person name="Brover V.V."/>
            <person name="Troukhan M.E."/>
            <person name="Alexandrov N.A."/>
            <person name="Lu Y.-P."/>
            <person name="Flavell R.B."/>
            <person name="Feldmann K.A."/>
        </authorList>
    </citation>
    <scope>NUCLEOTIDE SEQUENCE [LARGE SCALE MRNA] (ISOFORM 1)</scope>
</reference>
<reference key="10">
    <citation type="journal article" date="2002" name="Biol. Chem.">
        <title>Enzymatic activity of the Arabidopsis sulfurtransferase resides in the C-terminal domain but is boosted by the N-terminal domain and the linker peptide in the full-length enzyme.</title>
        <authorList>
            <person name="Burow M."/>
            <person name="Kessler D."/>
            <person name="Papenbrock J."/>
        </authorList>
    </citation>
    <scope>FUNCTION</scope>
    <scope>CATALYTIC ACTIVITY</scope>
    <scope>BIOPHYSICOCHEMICAL PROPERTIES</scope>
    <scope>MUTAGENESIS OF CYS-152; CYS-295; CYS-305; CYS-333 AND CYS-340</scope>
</reference>
<reference key="11">
    <citation type="journal article" date="2002" name="FEBS Lett.">
        <title>Identification and characterization of single-domain thiosulfate sulfurtransferases from Arabidopsis thaliana.</title>
        <authorList>
            <person name="Bauer M."/>
            <person name="Papenbrock J."/>
        </authorList>
    </citation>
    <scope>FUNCTION</scope>
    <scope>CATALYTIC ACTIVITY</scope>
    <scope>BIOPHYSICOCHEMICAL PROPERTIES</scope>
</reference>
<reference key="12">
    <citation type="journal article" date="2003" name="Planta">
        <title>Arabidopsis sulfurtransferases: investigation of their function during senescence and in cyanide detoxification.</title>
        <authorList>
            <person name="Meyer T."/>
            <person name="Burow M."/>
            <person name="Bauer M."/>
            <person name="Papenbrock J."/>
        </authorList>
    </citation>
    <scope>INDUCTION</scope>
</reference>
<reference key="13">
    <citation type="journal article" date="2004" name="Plant Physiol.">
        <title>Intracellular localization of Arabidopsis sulfurtransferases.</title>
        <authorList>
            <person name="Bauer M."/>
            <person name="Dietrich C."/>
            <person name="Nowak K."/>
            <person name="Sierralta W.D."/>
            <person name="Papenbrock J."/>
        </authorList>
    </citation>
    <scope>SUBCELLULAR LOCATION</scope>
</reference>
<reference key="14">
    <citation type="journal article" date="2007" name="Plant Physiol. Biochem.">
        <title>Differential expression of Arabidopsis sulfurtransferases under various growth conditions.</title>
        <authorList>
            <person name="Bartels A."/>
            <person name="Mock H.P."/>
            <person name="Papenbrock J."/>
        </authorList>
    </citation>
    <scope>GENE FAMILY</scope>
    <scope>NOMENCLATURE</scope>
</reference>
<reference key="15">
    <citation type="journal article" date="2011" name="J. Biol. Chem.">
        <title>Sulfurtransferases 1 and 2 play essential roles in embryo and seed development in Arabidopsis thaliana.</title>
        <authorList>
            <person name="Mao G."/>
            <person name="Wang R."/>
            <person name="Guan Y."/>
            <person name="Liu Y."/>
            <person name="Zhang S."/>
        </authorList>
    </citation>
    <scope>FUNCTION</scope>
    <scope>TISSUE SPECIFICITY</scope>
    <scope>DISRUPTION PHENOTYPE</scope>
</reference>
<reference key="16">
    <citation type="journal article" date="2012" name="Mol. Cell. Proteomics">
        <title>Comparative large-scale characterisation of plant vs. mammal proteins reveals similar and idiosyncratic N-alpha acetylation features.</title>
        <authorList>
            <person name="Bienvenut W.V."/>
            <person name="Sumpton D."/>
            <person name="Martinez A."/>
            <person name="Lilla S."/>
            <person name="Espagne C."/>
            <person name="Meinnel T."/>
            <person name="Giglione C."/>
        </authorList>
    </citation>
    <scope>ACETYLATION [LARGE SCALE ANALYSIS] AT ALA-57</scope>
    <scope>CLEAVAGE OF TRANSIT PEPTIDE [LARGE SCALE ANALYSIS] AFTER ARG-56</scope>
    <scope>IDENTIFICATION BY MASS SPECTROMETRY [LARGE SCALE ANALYSIS]</scope>
</reference>
<sequence>MASTLFSRTFLAASHRLITPSLPQKIFNPATFLSRSLHSQLGSASTAYKSTTWARRAMASTGVETKAGYSTSSVSTSEPVVSVDWLHANLREPDLKILDASWYMPDEQRNPIQEYQVAHIPRALFFDLDGISDRKTSLPHMLPTEEAFAAGCSALGIDNKDEVVVYDGKGIFSAARVWWMFRVFGHEKVWVLDGGLPRWRASGYDVESSASGDAILKASAASEAIEKIYQGQTVSPITFQTKFQPHLVWTLDQVKNNMEDPTYQHIDARSKARFDGTAPEPRKGIRSGHIPGSKCIPFPQMFDSCNTLLPAEELKKRFDQEDISLDKPIMASCGTGVTACILAMGLHRLGKTDVPIYDGSWTEWATQPDLPIESVESSS</sequence>
<feature type="transit peptide" description="Mitochondrion" evidence="11">
    <location>
        <begin position="1"/>
        <end position="56"/>
    </location>
</feature>
<feature type="chain" id="PRO_0000416525" description="Thiosulfate/3-mercaptopyruvate sulfurtransferase 1, mitochondrial">
    <location>
        <begin position="57"/>
        <end position="379"/>
    </location>
</feature>
<feature type="domain" description="Rhodanese 1" evidence="1">
    <location>
        <begin position="91"/>
        <end position="208"/>
    </location>
</feature>
<feature type="domain" description="Rhodanese 2" evidence="1">
    <location>
        <begin position="259"/>
        <end position="373"/>
    </location>
</feature>
<feature type="active site" description="Cysteine persulfide intermediate" evidence="1">
    <location>
        <position position="333"/>
    </location>
</feature>
<feature type="modified residue" description="N-acetylalanine" evidence="11">
    <location>
        <position position="57"/>
    </location>
</feature>
<feature type="splice variant" id="VSP_042633" description="In isoform 2." evidence="10">
    <location>
        <begin position="1"/>
        <end position="57"/>
    </location>
</feature>
<feature type="mutagenesis site" description="Slight reduction of sulfurtransferase activity." evidence="5">
    <original>C</original>
    <variation>A</variation>
    <location>
        <position position="152"/>
    </location>
</feature>
<feature type="mutagenesis site" description="Slight reduction of sulfurtransferase activity." evidence="5">
    <original>C</original>
    <variation>N</variation>
    <location>
        <position position="295"/>
    </location>
</feature>
<feature type="mutagenesis site" description="Slight reduction of sulfurtransferase activity." evidence="5">
    <original>C</original>
    <variation>E</variation>
    <location>
        <position position="305"/>
    </location>
</feature>
<feature type="mutagenesis site" description="Loss of sulfurtransferase and 3-mercaptopyruvate sulfurtransferase activities." evidence="5">
    <original>C</original>
    <variation>S</variation>
    <location>
        <position position="333"/>
    </location>
</feature>
<feature type="mutagenesis site" description="Reduces thiosulfate sulfurtransferase activity 4-fold. Slight reduction of 3-mercaptopyruvate sulfurtransferase activity." evidence="5">
    <original>C</original>
    <variation>V</variation>
    <location>
        <position position="340"/>
    </location>
</feature>
<feature type="sequence conflict" description="In Ref. 2; CAB64716." evidence="10" ref="2">
    <original>E</original>
    <variation>D</variation>
    <location>
        <position position="114"/>
    </location>
</feature>
<feature type="sequence conflict" description="In Ref. 2; CAB64716." evidence="10" ref="2">
    <original>SLP</original>
    <variation>TFA</variation>
    <location>
        <begin position="137"/>
        <end position="139"/>
    </location>
</feature>
<feature type="sequence conflict" description="In Ref. 2; CAB64716." evidence="10" ref="2">
    <location>
        <position position="205"/>
    </location>
</feature>
<feature type="sequence conflict" description="In Ref. 2; CAB64716." evidence="10" ref="2">
    <original>T</original>
    <variation>S</variation>
    <location>
        <position position="238"/>
    </location>
</feature>
<evidence type="ECO:0000255" key="1">
    <source>
        <dbReference type="PROSITE-ProRule" id="PRU00173"/>
    </source>
</evidence>
<evidence type="ECO:0000269" key="2">
    <source>
    </source>
</evidence>
<evidence type="ECO:0000269" key="3">
    <source>
    </source>
</evidence>
<evidence type="ECO:0000269" key="4">
    <source>
    </source>
</evidence>
<evidence type="ECO:0000269" key="5">
    <source>
    </source>
</evidence>
<evidence type="ECO:0000269" key="6">
    <source>
    </source>
</evidence>
<evidence type="ECO:0000269" key="7">
    <source>
    </source>
</evidence>
<evidence type="ECO:0000269" key="8">
    <source>
    </source>
</evidence>
<evidence type="ECO:0000269" key="9">
    <source>
    </source>
</evidence>
<evidence type="ECO:0000305" key="10"/>
<evidence type="ECO:0007744" key="11">
    <source>
    </source>
</evidence>
<keyword id="KW-0007">Acetylation</keyword>
<keyword id="KW-0025">Alternative splicing</keyword>
<keyword id="KW-0496">Mitochondrion</keyword>
<keyword id="KW-0670">Pyruvate</keyword>
<keyword id="KW-1185">Reference proteome</keyword>
<keyword id="KW-0677">Repeat</keyword>
<keyword id="KW-0808">Transferase</keyword>
<keyword id="KW-0809">Transit peptide</keyword>
<protein>
    <recommendedName>
        <fullName>Thiosulfate/3-mercaptopyruvate sulfurtransferase 1, mitochondrial</fullName>
        <ecNumber evidence="2 4 5 6">2.8.1.1</ecNumber>
        <ecNumber evidence="2 4 5 6">2.8.1.2</ecNumber>
    </recommendedName>
    <alternativeName>
        <fullName>AtMST1</fullName>
    </alternativeName>
    <alternativeName>
        <fullName>Rhodanese homolog protein 1</fullName>
        <shortName>AtRDH1</shortName>
    </alternativeName>
    <alternativeName>
        <fullName>Sulfurtransferase 1</fullName>
        <shortName>AtStr1</shortName>
    </alternativeName>
</protein>
<proteinExistence type="evidence at protein level"/>